<protein>
    <recommendedName>
        <fullName evidence="1">Probable cytosol aminopeptidase</fullName>
        <ecNumber evidence="1">3.4.11.1</ecNumber>
    </recommendedName>
    <alternativeName>
        <fullName evidence="1">Leucine aminopeptidase</fullName>
        <shortName evidence="1">LAP</shortName>
        <ecNumber evidence="1">3.4.11.10</ecNumber>
    </alternativeName>
    <alternativeName>
        <fullName evidence="1">Leucyl aminopeptidase</fullName>
    </alternativeName>
</protein>
<evidence type="ECO:0000255" key="1">
    <source>
        <dbReference type="HAMAP-Rule" id="MF_00181"/>
    </source>
</evidence>
<comment type="function">
    <text evidence="1">Presumably involved in the processing and regular turnover of intracellular proteins. Catalyzes the removal of unsubstituted N-terminal amino acids from various peptides.</text>
</comment>
<comment type="catalytic activity">
    <reaction evidence="1">
        <text>Release of an N-terminal amino acid, Xaa-|-Yaa-, in which Xaa is preferably Leu, but may be other amino acids including Pro although not Arg or Lys, and Yaa may be Pro. Amino acid amides and methyl esters are also readily hydrolyzed, but rates on arylamides are exceedingly low.</text>
        <dbReference type="EC" id="3.4.11.1"/>
    </reaction>
</comment>
<comment type="catalytic activity">
    <reaction evidence="1">
        <text>Release of an N-terminal amino acid, preferentially leucine, but not glutamic or aspartic acids.</text>
        <dbReference type="EC" id="3.4.11.10"/>
    </reaction>
</comment>
<comment type="cofactor">
    <cofactor evidence="1">
        <name>Mn(2+)</name>
        <dbReference type="ChEBI" id="CHEBI:29035"/>
    </cofactor>
    <text evidence="1">Binds 2 manganese ions per subunit.</text>
</comment>
<comment type="subcellular location">
    <subcellularLocation>
        <location evidence="1">Cytoplasm</location>
    </subcellularLocation>
</comment>
<comment type="similarity">
    <text evidence="1">Belongs to the peptidase M17 family.</text>
</comment>
<name>AMPA_PSEFS</name>
<sequence length="496" mass="52436">MELVVKSVSPETLKTATLVVAIGEGRKLGVAAKQLDELSGGAISAVLKRGDLAGKVGQSLLLQSLPNLKAERVLLVGVGKEAELGDRPFRKIISGILTTLKGLGGSDATLALDEIVVKGRDSYGKTRLLAETLVDGGYIFDEFKSQKAEPRALKKITLLTIKAAQAEVERAVTHAQAIANGMSFTRDLGNLPPNICHPTFLGEQAKALGKEFKGLKVEVLDEKKIKELGMGSFYAVGQGSDQPPRLIVMQYNGGKKSEKPYALVGKGITFDTGGISLKPGLGMDEMKYDMGGAASVFGTLRAVLELKLPINLVCILACAENMPSGGATRPGDIVTTLSGQTVEILNTDAEGRLVLCDALTYAERFKPQAVIDIATLTGACIVALGSHTSGLLGNSDELIEQLLSAGKAADDRAWQLPLFDEYQEQLDSPFADIANIGGPKAGTITAACFLSRFAKNFNWAHLDIAGTAWTSGGKDKGATGRPVPLLTQYLLDRAKA</sequence>
<reference key="1">
    <citation type="journal article" date="2009" name="Genome Biol.">
        <title>Genomic and genetic analyses of diversity and plant interactions of Pseudomonas fluorescens.</title>
        <authorList>
            <person name="Silby M.W."/>
            <person name="Cerdeno-Tarraga A.M."/>
            <person name="Vernikos G.S."/>
            <person name="Giddens S.R."/>
            <person name="Jackson R.W."/>
            <person name="Preston G.M."/>
            <person name="Zhang X.-X."/>
            <person name="Moon C.D."/>
            <person name="Gehrig S.M."/>
            <person name="Godfrey S.A.C."/>
            <person name="Knight C.G."/>
            <person name="Malone J.G."/>
            <person name="Robinson Z."/>
            <person name="Spiers A.J."/>
            <person name="Harris S."/>
            <person name="Challis G.L."/>
            <person name="Yaxley A.M."/>
            <person name="Harris D."/>
            <person name="Seeger K."/>
            <person name="Murphy L."/>
            <person name="Rutter S."/>
            <person name="Squares R."/>
            <person name="Quail M.A."/>
            <person name="Saunders E."/>
            <person name="Mavromatis K."/>
            <person name="Brettin T.S."/>
            <person name="Bentley S.D."/>
            <person name="Hothersall J."/>
            <person name="Stephens E."/>
            <person name="Thomas C.M."/>
            <person name="Parkhill J."/>
            <person name="Levy S.B."/>
            <person name="Rainey P.B."/>
            <person name="Thomson N.R."/>
        </authorList>
    </citation>
    <scope>NUCLEOTIDE SEQUENCE [LARGE SCALE GENOMIC DNA]</scope>
    <source>
        <strain>SBW25</strain>
    </source>
</reference>
<feature type="chain" id="PRO_1000203837" description="Probable cytosol aminopeptidase">
    <location>
        <begin position="1"/>
        <end position="496"/>
    </location>
</feature>
<feature type="active site" evidence="1">
    <location>
        <position position="278"/>
    </location>
</feature>
<feature type="active site" evidence="1">
    <location>
        <position position="352"/>
    </location>
</feature>
<feature type="binding site" evidence="1">
    <location>
        <position position="266"/>
    </location>
    <ligand>
        <name>Mn(2+)</name>
        <dbReference type="ChEBI" id="CHEBI:29035"/>
        <label>2</label>
    </ligand>
</feature>
<feature type="binding site" evidence="1">
    <location>
        <position position="271"/>
    </location>
    <ligand>
        <name>Mn(2+)</name>
        <dbReference type="ChEBI" id="CHEBI:29035"/>
        <label>1</label>
    </ligand>
</feature>
<feature type="binding site" evidence="1">
    <location>
        <position position="271"/>
    </location>
    <ligand>
        <name>Mn(2+)</name>
        <dbReference type="ChEBI" id="CHEBI:29035"/>
        <label>2</label>
    </ligand>
</feature>
<feature type="binding site" evidence="1">
    <location>
        <position position="289"/>
    </location>
    <ligand>
        <name>Mn(2+)</name>
        <dbReference type="ChEBI" id="CHEBI:29035"/>
        <label>2</label>
    </ligand>
</feature>
<feature type="binding site" evidence="1">
    <location>
        <position position="348"/>
    </location>
    <ligand>
        <name>Mn(2+)</name>
        <dbReference type="ChEBI" id="CHEBI:29035"/>
        <label>1</label>
    </ligand>
</feature>
<feature type="binding site" evidence="1">
    <location>
        <position position="350"/>
    </location>
    <ligand>
        <name>Mn(2+)</name>
        <dbReference type="ChEBI" id="CHEBI:29035"/>
        <label>1</label>
    </ligand>
</feature>
<feature type="binding site" evidence="1">
    <location>
        <position position="350"/>
    </location>
    <ligand>
        <name>Mn(2+)</name>
        <dbReference type="ChEBI" id="CHEBI:29035"/>
        <label>2</label>
    </ligand>
</feature>
<dbReference type="EC" id="3.4.11.1" evidence="1"/>
<dbReference type="EC" id="3.4.11.10" evidence="1"/>
<dbReference type="EMBL" id="AM181176">
    <property type="protein sequence ID" value="CAY47319.1"/>
    <property type="molecule type" value="Genomic_DNA"/>
</dbReference>
<dbReference type="RefSeq" id="WP_012722397.1">
    <property type="nucleotide sequence ID" value="NC_012660.1"/>
</dbReference>
<dbReference type="SMR" id="C3K6G5"/>
<dbReference type="STRING" id="294.SRM1_01033"/>
<dbReference type="MEROPS" id="M17.003"/>
<dbReference type="PATRIC" id="fig|216595.4.peg.1289"/>
<dbReference type="eggNOG" id="COG0260">
    <property type="taxonomic scope" value="Bacteria"/>
</dbReference>
<dbReference type="HOGENOM" id="CLU_013734_2_2_6"/>
<dbReference type="OrthoDB" id="9809354at2"/>
<dbReference type="GO" id="GO:0005737">
    <property type="term" value="C:cytoplasm"/>
    <property type="evidence" value="ECO:0007669"/>
    <property type="project" value="UniProtKB-SubCell"/>
</dbReference>
<dbReference type="GO" id="GO:0030145">
    <property type="term" value="F:manganese ion binding"/>
    <property type="evidence" value="ECO:0007669"/>
    <property type="project" value="UniProtKB-UniRule"/>
</dbReference>
<dbReference type="GO" id="GO:0070006">
    <property type="term" value="F:metalloaminopeptidase activity"/>
    <property type="evidence" value="ECO:0007669"/>
    <property type="project" value="InterPro"/>
</dbReference>
<dbReference type="GO" id="GO:0006508">
    <property type="term" value="P:proteolysis"/>
    <property type="evidence" value="ECO:0007669"/>
    <property type="project" value="UniProtKB-KW"/>
</dbReference>
<dbReference type="CDD" id="cd00433">
    <property type="entry name" value="Peptidase_M17"/>
    <property type="match status" value="1"/>
</dbReference>
<dbReference type="FunFam" id="3.40.630.10:FF:000004">
    <property type="entry name" value="Probable cytosol aminopeptidase"/>
    <property type="match status" value="1"/>
</dbReference>
<dbReference type="Gene3D" id="3.40.220.10">
    <property type="entry name" value="Leucine Aminopeptidase, subunit E, domain 1"/>
    <property type="match status" value="1"/>
</dbReference>
<dbReference type="Gene3D" id="3.40.630.10">
    <property type="entry name" value="Zn peptidases"/>
    <property type="match status" value="1"/>
</dbReference>
<dbReference type="HAMAP" id="MF_00181">
    <property type="entry name" value="Cytosol_peptidase_M17"/>
    <property type="match status" value="1"/>
</dbReference>
<dbReference type="InterPro" id="IPR011356">
    <property type="entry name" value="Leucine_aapep/pepB"/>
</dbReference>
<dbReference type="InterPro" id="IPR043472">
    <property type="entry name" value="Macro_dom-like"/>
</dbReference>
<dbReference type="InterPro" id="IPR000819">
    <property type="entry name" value="Peptidase_M17_C"/>
</dbReference>
<dbReference type="InterPro" id="IPR023042">
    <property type="entry name" value="Peptidase_M17_leu_NH2_pept"/>
</dbReference>
<dbReference type="InterPro" id="IPR008283">
    <property type="entry name" value="Peptidase_M17_N"/>
</dbReference>
<dbReference type="NCBIfam" id="NF002073">
    <property type="entry name" value="PRK00913.1-2"/>
    <property type="match status" value="1"/>
</dbReference>
<dbReference type="NCBIfam" id="NF002074">
    <property type="entry name" value="PRK00913.1-4"/>
    <property type="match status" value="1"/>
</dbReference>
<dbReference type="NCBIfam" id="NF002077">
    <property type="entry name" value="PRK00913.2-4"/>
    <property type="match status" value="1"/>
</dbReference>
<dbReference type="PANTHER" id="PTHR11963:SF23">
    <property type="entry name" value="CYTOSOL AMINOPEPTIDASE"/>
    <property type="match status" value="1"/>
</dbReference>
<dbReference type="PANTHER" id="PTHR11963">
    <property type="entry name" value="LEUCINE AMINOPEPTIDASE-RELATED"/>
    <property type="match status" value="1"/>
</dbReference>
<dbReference type="Pfam" id="PF00883">
    <property type="entry name" value="Peptidase_M17"/>
    <property type="match status" value="1"/>
</dbReference>
<dbReference type="Pfam" id="PF02789">
    <property type="entry name" value="Peptidase_M17_N"/>
    <property type="match status" value="1"/>
</dbReference>
<dbReference type="PRINTS" id="PR00481">
    <property type="entry name" value="LAMNOPPTDASE"/>
</dbReference>
<dbReference type="SUPFAM" id="SSF52949">
    <property type="entry name" value="Macro domain-like"/>
    <property type="match status" value="1"/>
</dbReference>
<dbReference type="SUPFAM" id="SSF53187">
    <property type="entry name" value="Zn-dependent exopeptidases"/>
    <property type="match status" value="1"/>
</dbReference>
<dbReference type="PROSITE" id="PS00631">
    <property type="entry name" value="CYTOSOL_AP"/>
    <property type="match status" value="1"/>
</dbReference>
<accession>C3K6G5</accession>
<gene>
    <name evidence="1" type="primary">pepA</name>
    <name type="ordered locus">PFLU_1055</name>
</gene>
<organism>
    <name type="scientific">Pseudomonas fluorescens (strain SBW25)</name>
    <dbReference type="NCBI Taxonomy" id="216595"/>
    <lineage>
        <taxon>Bacteria</taxon>
        <taxon>Pseudomonadati</taxon>
        <taxon>Pseudomonadota</taxon>
        <taxon>Gammaproteobacteria</taxon>
        <taxon>Pseudomonadales</taxon>
        <taxon>Pseudomonadaceae</taxon>
        <taxon>Pseudomonas</taxon>
    </lineage>
</organism>
<keyword id="KW-0031">Aminopeptidase</keyword>
<keyword id="KW-0963">Cytoplasm</keyword>
<keyword id="KW-0378">Hydrolase</keyword>
<keyword id="KW-0464">Manganese</keyword>
<keyword id="KW-0479">Metal-binding</keyword>
<keyword id="KW-0645">Protease</keyword>
<proteinExistence type="inferred from homology"/>